<keyword id="KW-0256">Endoplasmic reticulum</keyword>
<keyword id="KW-0472">Membrane</keyword>
<keyword id="KW-1185">Reference proteome</keyword>
<keyword id="KW-0812">Transmembrane</keyword>
<keyword id="KW-1133">Transmembrane helix</keyword>
<name>EMC6_DICDI</name>
<organism>
    <name type="scientific">Dictyostelium discoideum</name>
    <name type="common">Social amoeba</name>
    <dbReference type="NCBI Taxonomy" id="44689"/>
    <lineage>
        <taxon>Eukaryota</taxon>
        <taxon>Amoebozoa</taxon>
        <taxon>Evosea</taxon>
        <taxon>Eumycetozoa</taxon>
        <taxon>Dictyostelia</taxon>
        <taxon>Dictyosteliales</taxon>
        <taxon>Dictyosteliaceae</taxon>
        <taxon>Dictyostelium</taxon>
    </lineage>
</organism>
<proteinExistence type="inferred from homology"/>
<gene>
    <name type="primary">emc6</name>
    <name type="synonym">tmem93</name>
    <name type="ORF">DDB_G0280399</name>
</gene>
<accession>Q1ZXH4</accession>
<protein>
    <recommendedName>
        <fullName>ER membrane protein complex subunit 6</fullName>
    </recommendedName>
    <alternativeName>
        <fullName>Transmembrane protein 93</fullName>
    </alternativeName>
</protein>
<dbReference type="EMBL" id="AAFI02000035">
    <property type="protein sequence ID" value="EAS66878.1"/>
    <property type="molecule type" value="Genomic_DNA"/>
</dbReference>
<dbReference type="RefSeq" id="XP_001134562.1">
    <property type="nucleotide sequence ID" value="XM_001134562.1"/>
</dbReference>
<dbReference type="SMR" id="Q1ZXH4"/>
<dbReference type="FunCoup" id="Q1ZXH4">
    <property type="interactions" value="322"/>
</dbReference>
<dbReference type="STRING" id="44689.Q1ZXH4"/>
<dbReference type="PaxDb" id="44689-DDB0231544"/>
<dbReference type="EnsemblProtists" id="EAS66878">
    <property type="protein sequence ID" value="EAS66878"/>
    <property type="gene ID" value="DDB_G0280399"/>
</dbReference>
<dbReference type="GeneID" id="8622457"/>
<dbReference type="KEGG" id="ddi:DDB_G0280399"/>
<dbReference type="dictyBase" id="DDB_G0280399">
    <property type="gene designation" value="tmem93"/>
</dbReference>
<dbReference type="VEuPathDB" id="AmoebaDB:DDB_G0280399"/>
<dbReference type="eggNOG" id="KOG4455">
    <property type="taxonomic scope" value="Eukaryota"/>
</dbReference>
<dbReference type="HOGENOM" id="CLU_110781_3_0_1"/>
<dbReference type="InParanoid" id="Q1ZXH4"/>
<dbReference type="OMA" id="MKANFEW"/>
<dbReference type="PhylomeDB" id="Q1ZXH4"/>
<dbReference type="PRO" id="PR:Q1ZXH4"/>
<dbReference type="Proteomes" id="UP000002195">
    <property type="component" value="Chromosome 3"/>
</dbReference>
<dbReference type="GO" id="GO:0072546">
    <property type="term" value="C:EMC complex"/>
    <property type="evidence" value="ECO:0000318"/>
    <property type="project" value="GO_Central"/>
</dbReference>
<dbReference type="GO" id="GO:0005789">
    <property type="term" value="C:endoplasmic reticulum membrane"/>
    <property type="evidence" value="ECO:0000250"/>
    <property type="project" value="UniProtKB"/>
</dbReference>
<dbReference type="GO" id="GO:0000045">
    <property type="term" value="P:autophagosome assembly"/>
    <property type="evidence" value="ECO:0000318"/>
    <property type="project" value="GO_Central"/>
</dbReference>
<dbReference type="GO" id="GO:0045050">
    <property type="term" value="P:protein insertion into ER membrane by stop-transfer membrane-anchor sequence"/>
    <property type="evidence" value="ECO:0000250"/>
    <property type="project" value="UniProtKB"/>
</dbReference>
<dbReference type="GO" id="GO:0071816">
    <property type="term" value="P:tail-anchored membrane protein insertion into ER membrane"/>
    <property type="evidence" value="ECO:0000250"/>
    <property type="project" value="UniProtKB"/>
</dbReference>
<dbReference type="InterPro" id="IPR008504">
    <property type="entry name" value="Emc6"/>
</dbReference>
<dbReference type="InterPro" id="IPR029008">
    <property type="entry name" value="EMC6-like"/>
</dbReference>
<dbReference type="PANTHER" id="PTHR20994">
    <property type="entry name" value="ER MEMBRANE PROTEIN COMPLEX SUBUNIT 6"/>
    <property type="match status" value="1"/>
</dbReference>
<dbReference type="PANTHER" id="PTHR20994:SF0">
    <property type="entry name" value="ER MEMBRANE PROTEIN COMPLEX SUBUNIT 6"/>
    <property type="match status" value="1"/>
</dbReference>
<dbReference type="Pfam" id="PF07019">
    <property type="entry name" value="EMC6"/>
    <property type="match status" value="1"/>
</dbReference>
<sequence length="123" mass="14433">MLHPQQMQEQQQQQQEAQAASIIPEHYEMEYIQRNNKTVSFCQIPISILGGAIAGVIGFSGVYGFLFYFFIYITFCSLFTLKENKNLHLYFPNPRSIWFDSIGAGLMPYILFWTFLYNIIHIY</sequence>
<feature type="chain" id="PRO_0000327388" description="ER membrane protein complex subunit 6">
    <location>
        <begin position="1"/>
        <end position="123"/>
    </location>
</feature>
<feature type="topological domain" description="Cytoplasmic" evidence="1">
    <location>
        <begin position="1"/>
        <end position="41"/>
    </location>
</feature>
<feature type="transmembrane region" description="Helical" evidence="1">
    <location>
        <begin position="42"/>
        <end position="57"/>
    </location>
</feature>
<feature type="topological domain" description="Lumenal" evidence="1">
    <location>
        <begin position="58"/>
        <end position="63"/>
    </location>
</feature>
<feature type="transmembrane region" description="Helical" evidence="1">
    <location>
        <begin position="64"/>
        <end position="84"/>
    </location>
</feature>
<feature type="topological domain" description="Cytoplasmic" evidence="1">
    <location>
        <begin position="85"/>
        <end position="102"/>
    </location>
</feature>
<feature type="transmembrane region" description="Helical" evidence="1">
    <location>
        <begin position="103"/>
        <end position="119"/>
    </location>
</feature>
<feature type="topological domain" description="Lumenal" evidence="1">
    <location>
        <begin position="120"/>
        <end position="123"/>
    </location>
</feature>
<reference key="1">
    <citation type="journal article" date="2005" name="Nature">
        <title>The genome of the social amoeba Dictyostelium discoideum.</title>
        <authorList>
            <person name="Eichinger L."/>
            <person name="Pachebat J.A."/>
            <person name="Gloeckner G."/>
            <person name="Rajandream M.A."/>
            <person name="Sucgang R."/>
            <person name="Berriman M."/>
            <person name="Song J."/>
            <person name="Olsen R."/>
            <person name="Szafranski K."/>
            <person name="Xu Q."/>
            <person name="Tunggal B."/>
            <person name="Kummerfeld S."/>
            <person name="Madera M."/>
            <person name="Konfortov B.A."/>
            <person name="Rivero F."/>
            <person name="Bankier A.T."/>
            <person name="Lehmann R."/>
            <person name="Hamlin N."/>
            <person name="Davies R."/>
            <person name="Gaudet P."/>
            <person name="Fey P."/>
            <person name="Pilcher K."/>
            <person name="Chen G."/>
            <person name="Saunders D."/>
            <person name="Sodergren E.J."/>
            <person name="Davis P."/>
            <person name="Kerhornou A."/>
            <person name="Nie X."/>
            <person name="Hall N."/>
            <person name="Anjard C."/>
            <person name="Hemphill L."/>
            <person name="Bason N."/>
            <person name="Farbrother P."/>
            <person name="Desany B."/>
            <person name="Just E."/>
            <person name="Morio T."/>
            <person name="Rost R."/>
            <person name="Churcher C.M."/>
            <person name="Cooper J."/>
            <person name="Haydock S."/>
            <person name="van Driessche N."/>
            <person name="Cronin A."/>
            <person name="Goodhead I."/>
            <person name="Muzny D.M."/>
            <person name="Mourier T."/>
            <person name="Pain A."/>
            <person name="Lu M."/>
            <person name="Harper D."/>
            <person name="Lindsay R."/>
            <person name="Hauser H."/>
            <person name="James K.D."/>
            <person name="Quiles M."/>
            <person name="Madan Babu M."/>
            <person name="Saito T."/>
            <person name="Buchrieser C."/>
            <person name="Wardroper A."/>
            <person name="Felder M."/>
            <person name="Thangavelu M."/>
            <person name="Johnson D."/>
            <person name="Knights A."/>
            <person name="Loulseged H."/>
            <person name="Mungall K.L."/>
            <person name="Oliver K."/>
            <person name="Price C."/>
            <person name="Quail M.A."/>
            <person name="Urushihara H."/>
            <person name="Hernandez J."/>
            <person name="Rabbinowitsch E."/>
            <person name="Steffen D."/>
            <person name="Sanders M."/>
            <person name="Ma J."/>
            <person name="Kohara Y."/>
            <person name="Sharp S."/>
            <person name="Simmonds M.N."/>
            <person name="Spiegler S."/>
            <person name="Tivey A."/>
            <person name="Sugano S."/>
            <person name="White B."/>
            <person name="Walker D."/>
            <person name="Woodward J.R."/>
            <person name="Winckler T."/>
            <person name="Tanaka Y."/>
            <person name="Shaulsky G."/>
            <person name="Schleicher M."/>
            <person name="Weinstock G.M."/>
            <person name="Rosenthal A."/>
            <person name="Cox E.C."/>
            <person name="Chisholm R.L."/>
            <person name="Gibbs R.A."/>
            <person name="Loomis W.F."/>
            <person name="Platzer M."/>
            <person name="Kay R.R."/>
            <person name="Williams J.G."/>
            <person name="Dear P.H."/>
            <person name="Noegel A.A."/>
            <person name="Barrell B.G."/>
            <person name="Kuspa A."/>
        </authorList>
    </citation>
    <scope>NUCLEOTIDE SEQUENCE [LARGE SCALE GENOMIC DNA]</scope>
    <source>
        <strain>AX4</strain>
    </source>
</reference>
<evidence type="ECO:0000250" key="1">
    <source>
        <dbReference type="UniProtKB" id="Q9BV81"/>
    </source>
</evidence>
<evidence type="ECO:0000305" key="2"/>
<comment type="function">
    <text evidence="1">Part of the endoplasmic reticulum membrane protein complex (EMC) that enables the energy-independent insertion into endoplasmic reticulum membranes of newly synthesized membrane proteins. Preferentially accommodates proteins with transmembrane domains that are weakly hydrophobic or contain destabilizing features such as charged and aromatic residues. Involved in the cotranslational insertion of multi-pass membrane proteins in which stop-transfer membrane-anchor sequences become ER membrane spanning helices. It is also required for the post-translational insertion of tail-anchored/TA proteins in endoplasmic reticulum membranes. By mediating the proper cotranslational insertion of N-terminal transmembrane domains in an N-exo topology, with translocated N-terminus in the lumen of the ER, controls the topology of multi-pass membrane proteins. By regulating the insertion of various proteins in membranes, it is indirectly involved in many cellular processes.</text>
</comment>
<comment type="subunit">
    <text evidence="1">Component of the ER membrane protein complex (EMC).</text>
</comment>
<comment type="subcellular location">
    <subcellularLocation>
        <location evidence="1">Endoplasmic reticulum membrane</location>
        <topology evidence="1">Multi-pass membrane protein</topology>
    </subcellularLocation>
</comment>
<comment type="similarity">
    <text evidence="2">Belongs to the EMC6 family.</text>
</comment>